<dbReference type="EC" id="2.7.2.1" evidence="1"/>
<dbReference type="EMBL" id="CP000253">
    <property type="protein sequence ID" value="ABD30888.1"/>
    <property type="molecule type" value="Genomic_DNA"/>
</dbReference>
<dbReference type="RefSeq" id="WP_000040069.1">
    <property type="nucleotide sequence ID" value="NZ_LS483365.1"/>
</dbReference>
<dbReference type="RefSeq" id="YP_500325.1">
    <property type="nucleotide sequence ID" value="NC_007795.1"/>
</dbReference>
<dbReference type="SMR" id="Q2FXL5"/>
<dbReference type="STRING" id="93061.SAOUHSC_01820"/>
<dbReference type="PaxDb" id="1280-SAXN108_1739"/>
<dbReference type="GeneID" id="3919290"/>
<dbReference type="KEGG" id="sao:SAOUHSC_01820"/>
<dbReference type="PATRIC" id="fig|93061.5.peg.1659"/>
<dbReference type="eggNOG" id="COG0282">
    <property type="taxonomic scope" value="Bacteria"/>
</dbReference>
<dbReference type="HOGENOM" id="CLU_020352_0_1_9"/>
<dbReference type="OrthoDB" id="9802453at2"/>
<dbReference type="UniPathway" id="UPA00340">
    <property type="reaction ID" value="UER00458"/>
</dbReference>
<dbReference type="PRO" id="PR:Q2FXL5"/>
<dbReference type="Proteomes" id="UP000008816">
    <property type="component" value="Chromosome"/>
</dbReference>
<dbReference type="GO" id="GO:0005737">
    <property type="term" value="C:cytoplasm"/>
    <property type="evidence" value="ECO:0007669"/>
    <property type="project" value="UniProtKB-SubCell"/>
</dbReference>
<dbReference type="GO" id="GO:0008776">
    <property type="term" value="F:acetate kinase activity"/>
    <property type="evidence" value="ECO:0000318"/>
    <property type="project" value="GO_Central"/>
</dbReference>
<dbReference type="GO" id="GO:0005524">
    <property type="term" value="F:ATP binding"/>
    <property type="evidence" value="ECO:0007669"/>
    <property type="project" value="UniProtKB-KW"/>
</dbReference>
<dbReference type="GO" id="GO:0000287">
    <property type="term" value="F:magnesium ion binding"/>
    <property type="evidence" value="ECO:0007669"/>
    <property type="project" value="UniProtKB-UniRule"/>
</dbReference>
<dbReference type="GO" id="GO:0006083">
    <property type="term" value="P:acetate metabolic process"/>
    <property type="evidence" value="ECO:0000318"/>
    <property type="project" value="GO_Central"/>
</dbReference>
<dbReference type="GO" id="GO:0006085">
    <property type="term" value="P:acetyl-CoA biosynthetic process"/>
    <property type="evidence" value="ECO:0007669"/>
    <property type="project" value="UniProtKB-UniRule"/>
</dbReference>
<dbReference type="CDD" id="cd24010">
    <property type="entry name" value="ASKHA_NBD_AcK_PK"/>
    <property type="match status" value="1"/>
</dbReference>
<dbReference type="Gene3D" id="3.30.420.40">
    <property type="match status" value="2"/>
</dbReference>
<dbReference type="HAMAP" id="MF_00020">
    <property type="entry name" value="Acetate_kinase"/>
    <property type="match status" value="1"/>
</dbReference>
<dbReference type="InterPro" id="IPR004372">
    <property type="entry name" value="Ac/propionate_kinase"/>
</dbReference>
<dbReference type="InterPro" id="IPR000890">
    <property type="entry name" value="Aliphatic_acid_kin_short-chain"/>
</dbReference>
<dbReference type="InterPro" id="IPR023865">
    <property type="entry name" value="Aliphatic_acid_kinase_CS"/>
</dbReference>
<dbReference type="InterPro" id="IPR043129">
    <property type="entry name" value="ATPase_NBD"/>
</dbReference>
<dbReference type="NCBIfam" id="TIGR00016">
    <property type="entry name" value="ackA"/>
    <property type="match status" value="1"/>
</dbReference>
<dbReference type="PANTHER" id="PTHR21060">
    <property type="entry name" value="ACETATE KINASE"/>
    <property type="match status" value="1"/>
</dbReference>
<dbReference type="PANTHER" id="PTHR21060:SF15">
    <property type="entry name" value="ACETATE KINASE-RELATED"/>
    <property type="match status" value="1"/>
</dbReference>
<dbReference type="Pfam" id="PF00871">
    <property type="entry name" value="Acetate_kinase"/>
    <property type="match status" value="1"/>
</dbReference>
<dbReference type="PIRSF" id="PIRSF000722">
    <property type="entry name" value="Acetate_prop_kin"/>
    <property type="match status" value="1"/>
</dbReference>
<dbReference type="PRINTS" id="PR00471">
    <property type="entry name" value="ACETATEKNASE"/>
</dbReference>
<dbReference type="SUPFAM" id="SSF53067">
    <property type="entry name" value="Actin-like ATPase domain"/>
    <property type="match status" value="2"/>
</dbReference>
<dbReference type="PROSITE" id="PS01075">
    <property type="entry name" value="ACETATE_KINASE_1"/>
    <property type="match status" value="1"/>
</dbReference>
<dbReference type="PROSITE" id="PS01076">
    <property type="entry name" value="ACETATE_KINASE_2"/>
    <property type="match status" value="1"/>
</dbReference>
<keyword id="KW-0067">ATP-binding</keyword>
<keyword id="KW-0963">Cytoplasm</keyword>
<keyword id="KW-0418">Kinase</keyword>
<keyword id="KW-0460">Magnesium</keyword>
<keyword id="KW-0479">Metal-binding</keyword>
<keyword id="KW-0547">Nucleotide-binding</keyword>
<keyword id="KW-1185">Reference proteome</keyword>
<keyword id="KW-0808">Transferase</keyword>
<proteinExistence type="inferred from homology"/>
<protein>
    <recommendedName>
        <fullName evidence="1">Acetate kinase</fullName>
        <ecNumber evidence="1">2.7.2.1</ecNumber>
    </recommendedName>
    <alternativeName>
        <fullName evidence="1">Acetokinase</fullName>
    </alternativeName>
</protein>
<sequence>MSKLILAINAGSSSLKFQLIRMPEEELVTKGLVERIGLKDSIFTIEVNGEKVKTVQDIKDHVEAVDIMLDAFKAHNIINDINDIDGTGHRVVHGGEKFPESVAITDEVEKEIEELSELAPLHNPANLMGIRAFRKLLPNIPHVAIFDTAFHQTMPEKAYLYSLPYHYYKDYGIRKYGFHGTSHKFVSQRAAEMLDKPIEDLRIISCHIGNGASIAAIDGGKSIDTSMGFTPLAGVTMGTRSGNIDPALIPFIMEKTGKTAEQVLEILNKESGLLGLSGTSSDLRDLSEEAESGKARSQMALDVFASKIHKYIGSYAARMHGVDVIVFTAGIGENSVEIRAKVLEGLEFMGVYWDPKKNENLLRGKEGFINYPHSPVKVVVIPTDEESMIARDVMTFGGLK</sequence>
<name>ACKA_STAA8</name>
<gene>
    <name evidence="1" type="primary">ackA</name>
    <name type="ordered locus">SAOUHSC_01820</name>
</gene>
<evidence type="ECO:0000255" key="1">
    <source>
        <dbReference type="HAMAP-Rule" id="MF_00020"/>
    </source>
</evidence>
<feature type="chain" id="PRO_1000002264" description="Acetate kinase">
    <location>
        <begin position="1"/>
        <end position="400"/>
    </location>
</feature>
<feature type="active site" description="Proton donor/acceptor" evidence="1">
    <location>
        <position position="147"/>
    </location>
</feature>
<feature type="binding site" evidence="1">
    <location>
        <position position="9"/>
    </location>
    <ligand>
        <name>Mg(2+)</name>
        <dbReference type="ChEBI" id="CHEBI:18420"/>
    </ligand>
</feature>
<feature type="binding site" evidence="1">
    <location>
        <position position="16"/>
    </location>
    <ligand>
        <name>ATP</name>
        <dbReference type="ChEBI" id="CHEBI:30616"/>
    </ligand>
</feature>
<feature type="binding site" evidence="1">
    <location>
        <position position="90"/>
    </location>
    <ligand>
        <name>substrate</name>
    </ligand>
</feature>
<feature type="binding site" evidence="1">
    <location>
        <begin position="207"/>
        <end position="211"/>
    </location>
    <ligand>
        <name>ATP</name>
        <dbReference type="ChEBI" id="CHEBI:30616"/>
    </ligand>
</feature>
<feature type="binding site" evidence="1">
    <location>
        <begin position="282"/>
        <end position="284"/>
    </location>
    <ligand>
        <name>ATP</name>
        <dbReference type="ChEBI" id="CHEBI:30616"/>
    </ligand>
</feature>
<feature type="binding site" evidence="1">
    <location>
        <begin position="330"/>
        <end position="334"/>
    </location>
    <ligand>
        <name>ATP</name>
        <dbReference type="ChEBI" id="CHEBI:30616"/>
    </ligand>
</feature>
<feature type="binding site" evidence="1">
    <location>
        <position position="385"/>
    </location>
    <ligand>
        <name>Mg(2+)</name>
        <dbReference type="ChEBI" id="CHEBI:18420"/>
    </ligand>
</feature>
<feature type="site" description="Transition state stabilizer" evidence="1">
    <location>
        <position position="179"/>
    </location>
</feature>
<feature type="site" description="Transition state stabilizer" evidence="1">
    <location>
        <position position="240"/>
    </location>
</feature>
<comment type="function">
    <text evidence="1">Catalyzes the formation of acetyl phosphate from acetate and ATP. Can also catalyze the reverse reaction.</text>
</comment>
<comment type="catalytic activity">
    <reaction evidence="1">
        <text>acetate + ATP = acetyl phosphate + ADP</text>
        <dbReference type="Rhea" id="RHEA:11352"/>
        <dbReference type="ChEBI" id="CHEBI:22191"/>
        <dbReference type="ChEBI" id="CHEBI:30089"/>
        <dbReference type="ChEBI" id="CHEBI:30616"/>
        <dbReference type="ChEBI" id="CHEBI:456216"/>
        <dbReference type="EC" id="2.7.2.1"/>
    </reaction>
</comment>
<comment type="cofactor">
    <cofactor evidence="1">
        <name>Mg(2+)</name>
        <dbReference type="ChEBI" id="CHEBI:18420"/>
    </cofactor>
    <cofactor evidence="1">
        <name>Mn(2+)</name>
        <dbReference type="ChEBI" id="CHEBI:29035"/>
    </cofactor>
    <text evidence="1">Mg(2+). Can also accept Mn(2+).</text>
</comment>
<comment type="pathway">
    <text evidence="1">Metabolic intermediate biosynthesis; acetyl-CoA biosynthesis; acetyl-CoA from acetate: step 1/2.</text>
</comment>
<comment type="subunit">
    <text evidence="1">Homodimer.</text>
</comment>
<comment type="subcellular location">
    <subcellularLocation>
        <location evidence="1">Cytoplasm</location>
    </subcellularLocation>
</comment>
<comment type="similarity">
    <text evidence="1">Belongs to the acetokinase family.</text>
</comment>
<organism>
    <name type="scientific">Staphylococcus aureus (strain NCTC 8325 / PS 47)</name>
    <dbReference type="NCBI Taxonomy" id="93061"/>
    <lineage>
        <taxon>Bacteria</taxon>
        <taxon>Bacillati</taxon>
        <taxon>Bacillota</taxon>
        <taxon>Bacilli</taxon>
        <taxon>Bacillales</taxon>
        <taxon>Staphylococcaceae</taxon>
        <taxon>Staphylococcus</taxon>
    </lineage>
</organism>
<reference key="1">
    <citation type="book" date="2006" name="Gram positive pathogens, 2nd edition">
        <title>The Staphylococcus aureus NCTC 8325 genome.</title>
        <editorList>
            <person name="Fischetti V."/>
            <person name="Novick R."/>
            <person name="Ferretti J."/>
            <person name="Portnoy D."/>
            <person name="Rood J."/>
        </editorList>
        <authorList>
            <person name="Gillaspy A.F."/>
            <person name="Worrell V."/>
            <person name="Orvis J."/>
            <person name="Roe B.A."/>
            <person name="Dyer D.W."/>
            <person name="Iandolo J.J."/>
        </authorList>
    </citation>
    <scope>NUCLEOTIDE SEQUENCE [LARGE SCALE GENOMIC DNA]</scope>
    <source>
        <strain>NCTC 8325 / PS 47</strain>
    </source>
</reference>
<accession>Q2FXL5</accession>